<sequence>MAVSERRGLSGESPTQCRWGYLSLLVLTLSGCSGRIHRLTLTGEKRADIQLNSFGFYTNGSLEVELSLLRLSLQETEKKLPKVGFSLSRVRSGSVRSYSRRNSHECPLDRNSSNFLVLFLINIKDLQVQVRKYGEQKLFISPGLLPEAPTQSGPPKPDPAGTPKDNHVIHPSPTEMSAVKENQTAPQVSGDKTTPGEHRHSSERQPPTQDPSGKEKDQVLGLGHLNDSYNFSFHIVISSRAEEGQYSLNFHNCHNSIPGQEQPFDLTVMIREKNPEGFLSAAEIPLFKLYLIMSACFLAADIFWVSVLCKNTYSVFKIHWLMAALAFTKSVSLLFHSINYYFINSQGHPIEGLAVMHYITHLLKGALLFITIALIGSGWAFVKYMLSDKEKKIFGIVIPLQVLANVAYIVIESREEGASDYGLWKEILFLVDLICCGAILFPVVWSIRHLQDASGTDGKVAVNLARLKLFRHYYVMVICYIYFTRIIAILLQVAVPFQWQWLYQLLVESSTLAFFVLTGYKFQPAGDNPYLQLPQEDEEDVQMEQVMTDSGFREGLSKVNKTASGRELL</sequence>
<reference key="1">
    <citation type="journal article" date="2007" name="DNA Seq.">
        <title>Human GPR107 and murine Gpr108 are members of the LUSTR family of proteins found in both plants and animals, having similar topology to G-protein coupled receptors.</title>
        <authorList>
            <person name="Edgar A.J."/>
        </authorList>
    </citation>
    <scope>NUCLEOTIDE SEQUENCE [MRNA] (ISOFORM 2)</scope>
</reference>
<reference key="2">
    <citation type="journal article" date="2005" name="Science">
        <title>The transcriptional landscape of the mammalian genome.</title>
        <authorList>
            <person name="Carninci P."/>
            <person name="Kasukawa T."/>
            <person name="Katayama S."/>
            <person name="Gough J."/>
            <person name="Frith M.C."/>
            <person name="Maeda N."/>
            <person name="Oyama R."/>
            <person name="Ravasi T."/>
            <person name="Lenhard B."/>
            <person name="Wells C."/>
            <person name="Kodzius R."/>
            <person name="Shimokawa K."/>
            <person name="Bajic V.B."/>
            <person name="Brenner S.E."/>
            <person name="Batalov S."/>
            <person name="Forrest A.R."/>
            <person name="Zavolan M."/>
            <person name="Davis M.J."/>
            <person name="Wilming L.G."/>
            <person name="Aidinis V."/>
            <person name="Allen J.E."/>
            <person name="Ambesi-Impiombato A."/>
            <person name="Apweiler R."/>
            <person name="Aturaliya R.N."/>
            <person name="Bailey T.L."/>
            <person name="Bansal M."/>
            <person name="Baxter L."/>
            <person name="Beisel K.W."/>
            <person name="Bersano T."/>
            <person name="Bono H."/>
            <person name="Chalk A.M."/>
            <person name="Chiu K.P."/>
            <person name="Choudhary V."/>
            <person name="Christoffels A."/>
            <person name="Clutterbuck D.R."/>
            <person name="Crowe M.L."/>
            <person name="Dalla E."/>
            <person name="Dalrymple B.P."/>
            <person name="de Bono B."/>
            <person name="Della Gatta G."/>
            <person name="di Bernardo D."/>
            <person name="Down T."/>
            <person name="Engstrom P."/>
            <person name="Fagiolini M."/>
            <person name="Faulkner G."/>
            <person name="Fletcher C.F."/>
            <person name="Fukushima T."/>
            <person name="Furuno M."/>
            <person name="Futaki S."/>
            <person name="Gariboldi M."/>
            <person name="Georgii-Hemming P."/>
            <person name="Gingeras T.R."/>
            <person name="Gojobori T."/>
            <person name="Green R.E."/>
            <person name="Gustincich S."/>
            <person name="Harbers M."/>
            <person name="Hayashi Y."/>
            <person name="Hensch T.K."/>
            <person name="Hirokawa N."/>
            <person name="Hill D."/>
            <person name="Huminiecki L."/>
            <person name="Iacono M."/>
            <person name="Ikeo K."/>
            <person name="Iwama A."/>
            <person name="Ishikawa T."/>
            <person name="Jakt M."/>
            <person name="Kanapin A."/>
            <person name="Katoh M."/>
            <person name="Kawasawa Y."/>
            <person name="Kelso J."/>
            <person name="Kitamura H."/>
            <person name="Kitano H."/>
            <person name="Kollias G."/>
            <person name="Krishnan S.P."/>
            <person name="Kruger A."/>
            <person name="Kummerfeld S.K."/>
            <person name="Kurochkin I.V."/>
            <person name="Lareau L.F."/>
            <person name="Lazarevic D."/>
            <person name="Lipovich L."/>
            <person name="Liu J."/>
            <person name="Liuni S."/>
            <person name="McWilliam S."/>
            <person name="Madan Babu M."/>
            <person name="Madera M."/>
            <person name="Marchionni L."/>
            <person name="Matsuda H."/>
            <person name="Matsuzawa S."/>
            <person name="Miki H."/>
            <person name="Mignone F."/>
            <person name="Miyake S."/>
            <person name="Morris K."/>
            <person name="Mottagui-Tabar S."/>
            <person name="Mulder N."/>
            <person name="Nakano N."/>
            <person name="Nakauchi H."/>
            <person name="Ng P."/>
            <person name="Nilsson R."/>
            <person name="Nishiguchi S."/>
            <person name="Nishikawa S."/>
            <person name="Nori F."/>
            <person name="Ohara O."/>
            <person name="Okazaki Y."/>
            <person name="Orlando V."/>
            <person name="Pang K.C."/>
            <person name="Pavan W.J."/>
            <person name="Pavesi G."/>
            <person name="Pesole G."/>
            <person name="Petrovsky N."/>
            <person name="Piazza S."/>
            <person name="Reed J."/>
            <person name="Reid J.F."/>
            <person name="Ring B.Z."/>
            <person name="Ringwald M."/>
            <person name="Rost B."/>
            <person name="Ruan Y."/>
            <person name="Salzberg S.L."/>
            <person name="Sandelin A."/>
            <person name="Schneider C."/>
            <person name="Schoenbach C."/>
            <person name="Sekiguchi K."/>
            <person name="Semple C.A."/>
            <person name="Seno S."/>
            <person name="Sessa L."/>
            <person name="Sheng Y."/>
            <person name="Shibata Y."/>
            <person name="Shimada H."/>
            <person name="Shimada K."/>
            <person name="Silva D."/>
            <person name="Sinclair B."/>
            <person name="Sperling S."/>
            <person name="Stupka E."/>
            <person name="Sugiura K."/>
            <person name="Sultana R."/>
            <person name="Takenaka Y."/>
            <person name="Taki K."/>
            <person name="Tammoja K."/>
            <person name="Tan S.L."/>
            <person name="Tang S."/>
            <person name="Taylor M.S."/>
            <person name="Tegner J."/>
            <person name="Teichmann S.A."/>
            <person name="Ueda H.R."/>
            <person name="van Nimwegen E."/>
            <person name="Verardo R."/>
            <person name="Wei C.L."/>
            <person name="Yagi K."/>
            <person name="Yamanishi H."/>
            <person name="Zabarovsky E."/>
            <person name="Zhu S."/>
            <person name="Zimmer A."/>
            <person name="Hide W."/>
            <person name="Bult C."/>
            <person name="Grimmond S.M."/>
            <person name="Teasdale R.D."/>
            <person name="Liu E.T."/>
            <person name="Brusic V."/>
            <person name="Quackenbush J."/>
            <person name="Wahlestedt C."/>
            <person name="Mattick J.S."/>
            <person name="Hume D.A."/>
            <person name="Kai C."/>
            <person name="Sasaki D."/>
            <person name="Tomaru Y."/>
            <person name="Fukuda S."/>
            <person name="Kanamori-Katayama M."/>
            <person name="Suzuki M."/>
            <person name="Aoki J."/>
            <person name="Arakawa T."/>
            <person name="Iida J."/>
            <person name="Imamura K."/>
            <person name="Itoh M."/>
            <person name="Kato T."/>
            <person name="Kawaji H."/>
            <person name="Kawagashira N."/>
            <person name="Kawashima T."/>
            <person name="Kojima M."/>
            <person name="Kondo S."/>
            <person name="Konno H."/>
            <person name="Nakano K."/>
            <person name="Ninomiya N."/>
            <person name="Nishio T."/>
            <person name="Okada M."/>
            <person name="Plessy C."/>
            <person name="Shibata K."/>
            <person name="Shiraki T."/>
            <person name="Suzuki S."/>
            <person name="Tagami M."/>
            <person name="Waki K."/>
            <person name="Watahiki A."/>
            <person name="Okamura-Oho Y."/>
            <person name="Suzuki H."/>
            <person name="Kawai J."/>
            <person name="Hayashizaki Y."/>
        </authorList>
    </citation>
    <scope>NUCLEOTIDE SEQUENCE [LARGE SCALE MRNA] (ISOFORMS 1 AND 2)</scope>
    <source>
        <strain>C57BL/6J</strain>
        <tissue>Cerebellum</tissue>
    </source>
</reference>
<reference key="3">
    <citation type="journal article" date="2004" name="Genome Res.">
        <title>The status, quality, and expansion of the NIH full-length cDNA project: the Mammalian Gene Collection (MGC).</title>
        <authorList>
            <consortium name="The MGC Project Team"/>
        </authorList>
    </citation>
    <scope>NUCLEOTIDE SEQUENCE [LARGE SCALE MRNA] (ISOFORM 1)</scope>
    <source>
        <strain>FVB/N</strain>
        <tissue>Salivary gland</tissue>
    </source>
</reference>
<reference key="4">
    <citation type="journal article" date="2010" name="Cell">
        <title>A tissue-specific atlas of mouse protein phosphorylation and expression.</title>
        <authorList>
            <person name="Huttlin E.L."/>
            <person name="Jedrychowski M.P."/>
            <person name="Elias J.E."/>
            <person name="Goswami T."/>
            <person name="Rad R."/>
            <person name="Beausoleil S.A."/>
            <person name="Villen J."/>
            <person name="Haas W."/>
            <person name="Sowa M.E."/>
            <person name="Gygi S.P."/>
        </authorList>
    </citation>
    <scope>IDENTIFICATION BY MASS SPECTROMETRY [LARGE SCALE ANALYSIS]</scope>
    <source>
        <tissue>Pancreas</tissue>
    </source>
</reference>
<reference key="5">
    <citation type="journal article" date="2018" name="PLoS ONE">
        <title>GPR108, an NF-kappaB activator suppressed by TIRAP, negatively regulates TLR-triggered immune responses.</title>
        <authorList>
            <person name="Dong D."/>
            <person name="Zhou H."/>
            <person name="Na S.Y."/>
            <person name="Niedra R."/>
            <person name="Peng Y."/>
            <person name="Wang H."/>
            <person name="Seed B."/>
            <person name="Zhou G.L."/>
        </authorList>
    </citation>
    <scope>FUNCTION</scope>
    <scope>DISRUPTION PHENOTYPE</scope>
    <scope>TISSUE SPECIFICITY</scope>
    <scope>SUBCELLULAR LOCATION</scope>
</reference>
<reference key="6">
    <citation type="journal article" date="2020" name="Mol. Ther.">
        <title>GPR108 Is a Highly Conserved AAV Entry Factor.</title>
        <authorList>
            <person name="Dudek A.M."/>
            <person name="Zabaleta N."/>
            <person name="Zinn E."/>
            <person name="Pillay S."/>
            <person name="Zengel J."/>
            <person name="Porter C."/>
            <person name="Franceschini J.S."/>
            <person name="Estelien R."/>
            <person name="Carette J.E."/>
            <person name="Zhou G.L."/>
            <person name="Vandenberghe L.H."/>
        </authorList>
    </citation>
    <scope>FUNCTION (MICROBIAL INFECTION)</scope>
    <scope>SUBCELLULAR LOCATION</scope>
    <scope>DISRUPTION PHENOTYPE</scope>
</reference>
<keyword id="KW-0025">Alternative splicing</keyword>
<keyword id="KW-0325">Glycoprotein</keyword>
<keyword id="KW-0333">Golgi apparatus</keyword>
<keyword id="KW-0945">Host-virus interaction</keyword>
<keyword id="KW-0472">Membrane</keyword>
<keyword id="KW-1185">Reference proteome</keyword>
<keyword id="KW-0732">Signal</keyword>
<keyword id="KW-0812">Transmembrane</keyword>
<keyword id="KW-1133">Transmembrane helix</keyword>
<organism>
    <name type="scientific">Mus musculus</name>
    <name type="common">Mouse</name>
    <dbReference type="NCBI Taxonomy" id="10090"/>
    <lineage>
        <taxon>Eukaryota</taxon>
        <taxon>Metazoa</taxon>
        <taxon>Chordata</taxon>
        <taxon>Craniata</taxon>
        <taxon>Vertebrata</taxon>
        <taxon>Euteleostomi</taxon>
        <taxon>Mammalia</taxon>
        <taxon>Eutheria</taxon>
        <taxon>Euarchontoglires</taxon>
        <taxon>Glires</taxon>
        <taxon>Rodentia</taxon>
        <taxon>Myomorpha</taxon>
        <taxon>Muroidea</taxon>
        <taxon>Muridae</taxon>
        <taxon>Murinae</taxon>
        <taxon>Mus</taxon>
        <taxon>Mus</taxon>
    </lineage>
</organism>
<dbReference type="EMBL" id="AF376726">
    <property type="protein sequence ID" value="AAK57696.1"/>
    <property type="molecule type" value="mRNA"/>
</dbReference>
<dbReference type="EMBL" id="AK159313">
    <property type="protein sequence ID" value="BAE34981.1"/>
    <property type="molecule type" value="mRNA"/>
</dbReference>
<dbReference type="EMBL" id="AK047364">
    <property type="protein sequence ID" value="BAC33036.1"/>
    <property type="molecule type" value="mRNA"/>
</dbReference>
<dbReference type="EMBL" id="BC016104">
    <property type="protein sequence ID" value="AAH16104.1"/>
    <property type="molecule type" value="mRNA"/>
</dbReference>
<dbReference type="CCDS" id="CCDS28929.1">
    <molecule id="Q91WD0-1"/>
</dbReference>
<dbReference type="CCDS" id="CCDS89128.1">
    <molecule id="Q91WD0-2"/>
</dbReference>
<dbReference type="RefSeq" id="NP_001295001.1">
    <molecule id="Q91WD0-2"/>
    <property type="nucleotide sequence ID" value="NM_001308072.1"/>
</dbReference>
<dbReference type="RefSeq" id="NP_001295003.1">
    <property type="nucleotide sequence ID" value="NM_001308074.1"/>
</dbReference>
<dbReference type="RefSeq" id="NP_084360.2">
    <molecule id="Q91WD0-1"/>
    <property type="nucleotide sequence ID" value="NM_030084.4"/>
</dbReference>
<dbReference type="BioGRID" id="219318">
    <property type="interactions" value="2"/>
</dbReference>
<dbReference type="FunCoup" id="Q91WD0">
    <property type="interactions" value="1760"/>
</dbReference>
<dbReference type="STRING" id="10090.ENSMUSP00000156910"/>
<dbReference type="GlyCosmos" id="Q91WD0">
    <property type="glycosylation" value="5 sites, No reported glycans"/>
</dbReference>
<dbReference type="GlyGen" id="Q91WD0">
    <property type="glycosylation" value="6 sites, 2 N-linked glycans (2 sites)"/>
</dbReference>
<dbReference type="iPTMnet" id="Q91WD0"/>
<dbReference type="PhosphoSitePlus" id="Q91WD0"/>
<dbReference type="SwissPalm" id="Q91WD0"/>
<dbReference type="PaxDb" id="10090-ENSMUSP00000005975"/>
<dbReference type="PeptideAtlas" id="Q91WD0"/>
<dbReference type="ProteomicsDB" id="271256">
    <molecule id="Q91WD0-1"/>
</dbReference>
<dbReference type="ProteomicsDB" id="271257">
    <molecule id="Q91WD0-2"/>
</dbReference>
<dbReference type="Pumba" id="Q91WD0"/>
<dbReference type="Antibodypedia" id="24252">
    <property type="antibodies" value="203 antibodies from 29 providers"/>
</dbReference>
<dbReference type="DNASU" id="78308"/>
<dbReference type="Ensembl" id="ENSMUST00000005975.8">
    <molecule id="Q91WD0-2"/>
    <property type="protein sequence ID" value="ENSMUSP00000005975.8"/>
    <property type="gene ID" value="ENSMUSG00000005823.10"/>
</dbReference>
<dbReference type="Ensembl" id="ENSMUST00000233568.2">
    <molecule id="Q91WD0-1"/>
    <property type="protein sequence ID" value="ENSMUSP00000156910.2"/>
    <property type="gene ID" value="ENSMUSG00000005823.10"/>
</dbReference>
<dbReference type="GeneID" id="78308"/>
<dbReference type="KEGG" id="mmu:78308"/>
<dbReference type="UCSC" id="uc008deh.1">
    <molecule id="Q91WD0-1"/>
    <property type="organism name" value="mouse"/>
</dbReference>
<dbReference type="UCSC" id="uc008dei.1">
    <molecule id="Q91WD0-2"/>
    <property type="organism name" value="mouse"/>
</dbReference>
<dbReference type="AGR" id="MGI:1925558"/>
<dbReference type="CTD" id="56927"/>
<dbReference type="MGI" id="MGI:1925558">
    <property type="gene designation" value="Gpr108"/>
</dbReference>
<dbReference type="VEuPathDB" id="HostDB:ENSMUSG00000005823"/>
<dbReference type="eggNOG" id="KOG2569">
    <property type="taxonomic scope" value="Eukaryota"/>
</dbReference>
<dbReference type="GeneTree" id="ENSGT00940000160446"/>
<dbReference type="HOGENOM" id="CLU_020277_4_1_1"/>
<dbReference type="InParanoid" id="Q91WD0"/>
<dbReference type="OMA" id="RRGLGCW"/>
<dbReference type="OrthoDB" id="29657at2759"/>
<dbReference type="PhylomeDB" id="Q91WD0"/>
<dbReference type="TreeFam" id="TF314804"/>
<dbReference type="BioGRID-ORCS" id="78308">
    <property type="hits" value="1 hit in 77 CRISPR screens"/>
</dbReference>
<dbReference type="ChiTaRS" id="Gpr108">
    <property type="organism name" value="mouse"/>
</dbReference>
<dbReference type="PRO" id="PR:Q91WD0"/>
<dbReference type="Proteomes" id="UP000000589">
    <property type="component" value="Chromosome 17"/>
</dbReference>
<dbReference type="RNAct" id="Q91WD0">
    <property type="molecule type" value="protein"/>
</dbReference>
<dbReference type="Bgee" id="ENSMUSG00000005823">
    <property type="expression patterns" value="Expressed in granulocyte and 210 other cell types or tissues"/>
</dbReference>
<dbReference type="GO" id="GO:0033106">
    <property type="term" value="C:cis-Golgi network membrane"/>
    <property type="evidence" value="ECO:0000314"/>
    <property type="project" value="UniProtKB"/>
</dbReference>
<dbReference type="GO" id="GO:0005794">
    <property type="term" value="C:Golgi apparatus"/>
    <property type="evidence" value="ECO:0000314"/>
    <property type="project" value="MGI"/>
</dbReference>
<dbReference type="GO" id="GO:0000139">
    <property type="term" value="C:Golgi membrane"/>
    <property type="evidence" value="ECO:0007669"/>
    <property type="project" value="UniProtKB-SubCell"/>
</dbReference>
<dbReference type="GO" id="GO:0005802">
    <property type="term" value="C:trans-Golgi network"/>
    <property type="evidence" value="ECO:0007669"/>
    <property type="project" value="Ensembl"/>
</dbReference>
<dbReference type="GO" id="GO:0051607">
    <property type="term" value="P:defense response to virus"/>
    <property type="evidence" value="ECO:0000315"/>
    <property type="project" value="MGI"/>
</dbReference>
<dbReference type="GO" id="GO:0034122">
    <property type="term" value="P:negative regulation of toll-like receptor signaling pathway"/>
    <property type="evidence" value="ECO:0000315"/>
    <property type="project" value="UniProtKB"/>
</dbReference>
<dbReference type="GO" id="GO:0050776">
    <property type="term" value="P:regulation of immune response"/>
    <property type="evidence" value="ECO:0000315"/>
    <property type="project" value="UniProtKB"/>
</dbReference>
<dbReference type="GO" id="GO:0060337">
    <property type="term" value="P:type I interferon-mediated signaling pathway"/>
    <property type="evidence" value="ECO:0000315"/>
    <property type="project" value="MGI"/>
</dbReference>
<dbReference type="InterPro" id="IPR053937">
    <property type="entry name" value="GOST_TM"/>
</dbReference>
<dbReference type="InterPro" id="IPR009637">
    <property type="entry name" value="GPR107/GPR108-like"/>
</dbReference>
<dbReference type="PANTHER" id="PTHR21229">
    <property type="entry name" value="LUNG SEVEN TRANSMEMBRANE RECEPTOR"/>
    <property type="match status" value="1"/>
</dbReference>
<dbReference type="PANTHER" id="PTHR21229:SF11">
    <property type="entry name" value="PROTEIN GPR108"/>
    <property type="match status" value="1"/>
</dbReference>
<dbReference type="Pfam" id="PF06814">
    <property type="entry name" value="GOST_TM"/>
    <property type="match status" value="1"/>
</dbReference>
<proteinExistence type="evidence at protein level"/>
<accession>Q91WD0</accession>
<accession>Q8BXE9</accession>
<accession>Q925B1</accession>
<feature type="signal peptide" evidence="2">
    <location>
        <begin position="1"/>
        <end position="34"/>
    </location>
</feature>
<feature type="chain" id="PRO_0000045084" description="Protein GPR108">
    <location>
        <begin position="35"/>
        <end position="569"/>
    </location>
</feature>
<feature type="transmembrane region" description="Helical; Name=1" evidence="2">
    <location>
        <begin position="289"/>
        <end position="309"/>
    </location>
</feature>
<feature type="transmembrane region" description="Helical; Name=2" evidence="2">
    <location>
        <begin position="318"/>
        <end position="338"/>
    </location>
</feature>
<feature type="transmembrane region" description="Helical; Name=3" evidence="2">
    <location>
        <begin position="362"/>
        <end position="382"/>
    </location>
</feature>
<feature type="transmembrane region" description="Helical; Name=4" evidence="2">
    <location>
        <begin position="393"/>
        <end position="413"/>
    </location>
</feature>
<feature type="transmembrane region" description="Helical; Name=5" evidence="2">
    <location>
        <begin position="427"/>
        <end position="447"/>
    </location>
</feature>
<feature type="transmembrane region" description="Helical; Name=6" evidence="2">
    <location>
        <begin position="475"/>
        <end position="495"/>
    </location>
</feature>
<feature type="transmembrane region" description="Helical; Name=7" evidence="2">
    <location>
        <begin position="499"/>
        <end position="519"/>
    </location>
</feature>
<feature type="region of interest" description="Disordered" evidence="3">
    <location>
        <begin position="144"/>
        <end position="219"/>
    </location>
</feature>
<feature type="compositionally biased region" description="Polar residues" evidence="3">
    <location>
        <begin position="180"/>
        <end position="192"/>
    </location>
</feature>
<feature type="compositionally biased region" description="Basic and acidic residues" evidence="3">
    <location>
        <begin position="194"/>
        <end position="203"/>
    </location>
</feature>
<feature type="glycosylation site" description="N-linked (GlcNAc...) asparagine" evidence="2">
    <location>
        <position position="59"/>
    </location>
</feature>
<feature type="glycosylation site" description="N-linked (GlcNAc...) asparagine" evidence="2">
    <location>
        <position position="111"/>
    </location>
</feature>
<feature type="glycosylation site" description="N-linked (GlcNAc...) asparagine" evidence="2">
    <location>
        <position position="182"/>
    </location>
</feature>
<feature type="glycosylation site" description="N-linked (GlcNAc...) asparagine" evidence="2">
    <location>
        <position position="226"/>
    </location>
</feature>
<feature type="glycosylation site" description="N-linked (GlcNAc...) asparagine" evidence="2">
    <location>
        <position position="230"/>
    </location>
</feature>
<feature type="splice variant" id="VSP_016607" description="In isoform 2." evidence="6 7">
    <location>
        <begin position="168"/>
        <end position="174"/>
    </location>
</feature>
<feature type="sequence conflict" description="In Ref. 2; BAC33036." evidence="8" ref="2">
    <original>L</original>
    <variation>V</variation>
    <location>
        <position position="9"/>
    </location>
</feature>
<feature type="sequence conflict" description="In Ref. 2; BAC33036." evidence="8" ref="2">
    <original>S</original>
    <variation>P</variation>
    <location>
        <position position="280"/>
    </location>
</feature>
<feature type="sequence conflict" description="In Ref. 1; AAK57696." evidence="8" ref="1">
    <original>Q</original>
    <variation>H</variation>
    <location>
        <position position="401"/>
    </location>
</feature>
<name>GP108_MOUSE</name>
<gene>
    <name type="primary">Gpr108</name>
    <name evidence="7" type="synonym">Lustr2</name>
</gene>
<comment type="function">
    <text evidence="4">May play a role in intracellular immune modulation by activating NF-kappaB response and attenuating Toll-like-receptor response.</text>
</comment>
<comment type="function">
    <text evidence="5">(Microbial infection) Plays an essential function in adeno-associated virus (AAV) transduction, across multiple serotypes except AAV5. May play a critical role in mediating the endosomal virus escape or in the AAV virions trafficking from endosomes to the nucleus.</text>
</comment>
<comment type="subcellular location">
    <subcellularLocation>
        <location evidence="4">Golgi apparatus</location>
        <location evidence="4">cis-Golgi network membrane</location>
        <topology>Multi-pass membrane protein</topology>
    </subcellularLocation>
    <subcellularLocation>
        <location evidence="5">Golgi apparatus</location>
        <location evidence="5">trans-Golgi network membrane</location>
        <topology evidence="8">Multi-pass membrane protein</topology>
    </subcellularLocation>
    <subcellularLocation>
        <location>Golgi apparatus membrane</location>
        <topology evidence="2">Multi-pass membrane protein</topology>
    </subcellularLocation>
    <text evidence="4">Colocalizes with TLR3, -7, -4, and -9.</text>
</comment>
<comment type="alternative products">
    <event type="alternative splicing"/>
    <isoform>
        <id>Q91WD0-1</id>
        <name>1</name>
        <sequence type="displayed"/>
    </isoform>
    <isoform>
        <id>Q91WD0-2</id>
        <name>2</name>
        <sequence type="described" ref="VSP_016607"/>
    </isoform>
</comment>
<comment type="tissue specificity">
    <text evidence="4">High expression in spleen, lung, stomach, large and small intestine, and thymus.</text>
</comment>
<comment type="domain">
    <text evidence="1">(Microbial infection) N- and C-terminal domains are essential for mediating AAV transduction.</text>
</comment>
<comment type="disruption phenotype">
    <text evidence="4 5">Deficient mice are viable and fertile and exhibit normal Mendelian segregation, however deficient mice exhibit increased LPS-induced mortality. TLR-mediated pro-inflammatory signaling are increased in embryonic fibroblasts and macrophages from Gpr108 deficient mice (PubMed:30332431). Depending on the AAV serotype used, 10-fold to 100-fold reduced expression for AAV is observed in Gpr108 knockout mice following retro-orbital administration (PubMed:31784416).</text>
</comment>
<comment type="similarity">
    <text evidence="8">Belongs to the LU7TM family.</text>
</comment>
<evidence type="ECO:0000250" key="1">
    <source>
        <dbReference type="UniProtKB" id="Q9NPR9"/>
    </source>
</evidence>
<evidence type="ECO:0000255" key="2"/>
<evidence type="ECO:0000256" key="3">
    <source>
        <dbReference type="SAM" id="MobiDB-lite"/>
    </source>
</evidence>
<evidence type="ECO:0000269" key="4">
    <source>
    </source>
</evidence>
<evidence type="ECO:0000269" key="5">
    <source>
    </source>
</evidence>
<evidence type="ECO:0000303" key="6">
    <source>
    </source>
</evidence>
<evidence type="ECO:0000303" key="7">
    <source>
    </source>
</evidence>
<evidence type="ECO:0000305" key="8"/>
<protein>
    <recommendedName>
        <fullName>Protein GPR108</fullName>
    </recommendedName>
    <alternativeName>
        <fullName evidence="7">Lung seven transmembrane receptor 2</fullName>
    </alternativeName>
</protein>